<accession>Q63DR9</accession>
<feature type="chain" id="PRO_0000063118" description="Purine nucleoside phosphorylase DeoD-type">
    <location>
        <begin position="1"/>
        <end position="235"/>
    </location>
</feature>
<feature type="active site" description="Proton donor" evidence="2">
    <location>
        <position position="204"/>
    </location>
</feature>
<feature type="binding site" evidence="1">
    <location>
        <position position="4"/>
    </location>
    <ligand>
        <name>a purine D-ribonucleoside</name>
        <dbReference type="ChEBI" id="CHEBI:142355"/>
        <note>ligand shared between dimeric partners</note>
    </ligand>
</feature>
<feature type="binding site" description="in other chain" evidence="1">
    <location>
        <position position="20"/>
    </location>
    <ligand>
        <name>phosphate</name>
        <dbReference type="ChEBI" id="CHEBI:43474"/>
        <note>ligand shared between dimeric partners</note>
    </ligand>
</feature>
<feature type="binding site" description="in other chain" evidence="1">
    <location>
        <position position="24"/>
    </location>
    <ligand>
        <name>phosphate</name>
        <dbReference type="ChEBI" id="CHEBI:43474"/>
        <note>ligand shared between dimeric partners</note>
    </ligand>
</feature>
<feature type="binding site" evidence="1">
    <location>
        <position position="43"/>
    </location>
    <ligand>
        <name>phosphate</name>
        <dbReference type="ChEBI" id="CHEBI:43474"/>
        <note>ligand shared between dimeric partners</note>
    </ligand>
</feature>
<feature type="binding site" description="in other chain" evidence="1">
    <location>
        <begin position="87"/>
        <end position="90"/>
    </location>
    <ligand>
        <name>phosphate</name>
        <dbReference type="ChEBI" id="CHEBI:43474"/>
        <note>ligand shared between dimeric partners</note>
    </ligand>
</feature>
<feature type="binding site" description="in other chain" evidence="1">
    <location>
        <position position="162"/>
    </location>
    <ligand>
        <name>a purine D-ribonucleoside</name>
        <dbReference type="ChEBI" id="CHEBI:142355"/>
        <note>ligand shared between dimeric partners</note>
    </ligand>
</feature>
<feature type="binding site" description="in other chain" evidence="1">
    <location>
        <begin position="179"/>
        <end position="181"/>
    </location>
    <ligand>
        <name>a purine D-ribonucleoside</name>
        <dbReference type="ChEBI" id="CHEBI:142355"/>
        <note>ligand shared between dimeric partners</note>
    </ligand>
</feature>
<feature type="binding site" description="in other chain" evidence="1">
    <location>
        <begin position="203"/>
        <end position="204"/>
    </location>
    <ligand>
        <name>a purine D-ribonucleoside</name>
        <dbReference type="ChEBI" id="CHEBI:142355"/>
        <note>ligand shared between dimeric partners</note>
    </ligand>
</feature>
<feature type="site" description="Important for catalytic activity" evidence="2">
    <location>
        <position position="217"/>
    </location>
</feature>
<dbReference type="EC" id="2.4.2.1" evidence="2"/>
<dbReference type="EMBL" id="CP000001">
    <property type="protein sequence ID" value="AAU18904.1"/>
    <property type="molecule type" value="Genomic_DNA"/>
</dbReference>
<dbReference type="RefSeq" id="WP_000110704.1">
    <property type="nucleotide sequence ID" value="NZ_CP009968.1"/>
</dbReference>
<dbReference type="SMR" id="Q63DR9"/>
<dbReference type="GeneID" id="64182861"/>
<dbReference type="KEGG" id="bcz:BCE33L1344"/>
<dbReference type="PATRIC" id="fig|288681.22.peg.4208"/>
<dbReference type="Proteomes" id="UP000002612">
    <property type="component" value="Chromosome"/>
</dbReference>
<dbReference type="GO" id="GO:0005829">
    <property type="term" value="C:cytosol"/>
    <property type="evidence" value="ECO:0007669"/>
    <property type="project" value="TreeGrafter"/>
</dbReference>
<dbReference type="GO" id="GO:0004731">
    <property type="term" value="F:purine-nucleoside phosphorylase activity"/>
    <property type="evidence" value="ECO:0007669"/>
    <property type="project" value="UniProtKB-UniRule"/>
</dbReference>
<dbReference type="GO" id="GO:0006152">
    <property type="term" value="P:purine nucleoside catabolic process"/>
    <property type="evidence" value="ECO:0007669"/>
    <property type="project" value="TreeGrafter"/>
</dbReference>
<dbReference type="CDD" id="cd09006">
    <property type="entry name" value="PNP_EcPNPI-like"/>
    <property type="match status" value="1"/>
</dbReference>
<dbReference type="Gene3D" id="3.40.50.1580">
    <property type="entry name" value="Nucleoside phosphorylase domain"/>
    <property type="match status" value="1"/>
</dbReference>
<dbReference type="HAMAP" id="MF_01627">
    <property type="entry name" value="Pur_nucleosid_phosp"/>
    <property type="match status" value="1"/>
</dbReference>
<dbReference type="InterPro" id="IPR004402">
    <property type="entry name" value="DeoD-type"/>
</dbReference>
<dbReference type="InterPro" id="IPR018016">
    <property type="entry name" value="Nucleoside_phosphorylase_CS"/>
</dbReference>
<dbReference type="InterPro" id="IPR000845">
    <property type="entry name" value="Nucleoside_phosphorylase_d"/>
</dbReference>
<dbReference type="InterPro" id="IPR035994">
    <property type="entry name" value="Nucleoside_phosphorylase_sf"/>
</dbReference>
<dbReference type="NCBIfam" id="TIGR00107">
    <property type="entry name" value="deoD"/>
    <property type="match status" value="1"/>
</dbReference>
<dbReference type="NCBIfam" id="NF004489">
    <property type="entry name" value="PRK05819.1"/>
    <property type="match status" value="1"/>
</dbReference>
<dbReference type="NCBIfam" id="NF009914">
    <property type="entry name" value="PRK13374.1"/>
    <property type="match status" value="1"/>
</dbReference>
<dbReference type="PANTHER" id="PTHR43691:SF11">
    <property type="entry name" value="FI09636P-RELATED"/>
    <property type="match status" value="1"/>
</dbReference>
<dbReference type="PANTHER" id="PTHR43691">
    <property type="entry name" value="URIDINE PHOSPHORYLASE"/>
    <property type="match status" value="1"/>
</dbReference>
<dbReference type="Pfam" id="PF01048">
    <property type="entry name" value="PNP_UDP_1"/>
    <property type="match status" value="1"/>
</dbReference>
<dbReference type="SUPFAM" id="SSF53167">
    <property type="entry name" value="Purine and uridine phosphorylases"/>
    <property type="match status" value="1"/>
</dbReference>
<dbReference type="PROSITE" id="PS01232">
    <property type="entry name" value="PNP_UDP_1"/>
    <property type="match status" value="1"/>
</dbReference>
<sequence>MSVHIEAKQGEIAESILLPGDPLRAKYIAETFLEDVTCYNNVRGMLGFTGTYKGKRVSVQGTGMGVPSISIYVNELIQSYGVKNLIRVGTCGAIQKDVKVRDVIIAMTACTDSNMNRLTFPGFDFAPAANFDLLKKAYDAGTEKGLHVRVGNVLTADVFYRESMDMVKKLADYGVLAVEMETTALYTLAAKYGVNALSVLTVSDHIFTGEETTSEERQTTFNEMIEIALDAAIQQ</sequence>
<protein>
    <recommendedName>
        <fullName evidence="2">Purine nucleoside phosphorylase DeoD-type</fullName>
        <shortName evidence="2">PNP</shortName>
        <ecNumber evidence="2">2.4.2.1</ecNumber>
    </recommendedName>
</protein>
<gene>
    <name evidence="2" type="primary">deoD</name>
    <name type="ordered locus">BCE33L1344</name>
</gene>
<comment type="function">
    <text evidence="2">Catalyzes the reversible phosphorolytic breakdown of the N-glycosidic bond in the beta-(deoxy)ribonucleoside molecules, with the formation of the corresponding free purine bases and pentose-1-phosphate.</text>
</comment>
<comment type="catalytic activity">
    <reaction evidence="2">
        <text>a purine D-ribonucleoside + phosphate = a purine nucleobase + alpha-D-ribose 1-phosphate</text>
        <dbReference type="Rhea" id="RHEA:19805"/>
        <dbReference type="ChEBI" id="CHEBI:26386"/>
        <dbReference type="ChEBI" id="CHEBI:43474"/>
        <dbReference type="ChEBI" id="CHEBI:57720"/>
        <dbReference type="ChEBI" id="CHEBI:142355"/>
        <dbReference type="EC" id="2.4.2.1"/>
    </reaction>
</comment>
<comment type="catalytic activity">
    <reaction evidence="2">
        <text>a purine 2'-deoxy-D-ribonucleoside + phosphate = a purine nucleobase + 2-deoxy-alpha-D-ribose 1-phosphate</text>
        <dbReference type="Rhea" id="RHEA:36431"/>
        <dbReference type="ChEBI" id="CHEBI:26386"/>
        <dbReference type="ChEBI" id="CHEBI:43474"/>
        <dbReference type="ChEBI" id="CHEBI:57259"/>
        <dbReference type="ChEBI" id="CHEBI:142361"/>
        <dbReference type="EC" id="2.4.2.1"/>
    </reaction>
</comment>
<comment type="subunit">
    <text evidence="2">Homohexamer; trimer of homodimers.</text>
</comment>
<comment type="similarity">
    <text evidence="2">Belongs to the PNP/UDP phosphorylase family.</text>
</comment>
<evidence type="ECO:0000250" key="1">
    <source>
        <dbReference type="UniProtKB" id="P50389"/>
    </source>
</evidence>
<evidence type="ECO:0000255" key="2">
    <source>
        <dbReference type="HAMAP-Rule" id="MF_01627"/>
    </source>
</evidence>
<proteinExistence type="inferred from homology"/>
<name>DEOD_BACCZ</name>
<reference key="1">
    <citation type="journal article" date="2006" name="J. Bacteriol.">
        <title>Pathogenomic sequence analysis of Bacillus cereus and Bacillus thuringiensis isolates closely related to Bacillus anthracis.</title>
        <authorList>
            <person name="Han C.S."/>
            <person name="Xie G."/>
            <person name="Challacombe J.F."/>
            <person name="Altherr M.R."/>
            <person name="Bhotika S.S."/>
            <person name="Bruce D."/>
            <person name="Campbell C.S."/>
            <person name="Campbell M.L."/>
            <person name="Chen J."/>
            <person name="Chertkov O."/>
            <person name="Cleland C."/>
            <person name="Dimitrijevic M."/>
            <person name="Doggett N.A."/>
            <person name="Fawcett J.J."/>
            <person name="Glavina T."/>
            <person name="Goodwin L.A."/>
            <person name="Hill K.K."/>
            <person name="Hitchcock P."/>
            <person name="Jackson P.J."/>
            <person name="Keim P."/>
            <person name="Kewalramani A.R."/>
            <person name="Longmire J."/>
            <person name="Lucas S."/>
            <person name="Malfatti S."/>
            <person name="McMurry K."/>
            <person name="Meincke L.J."/>
            <person name="Misra M."/>
            <person name="Moseman B.L."/>
            <person name="Mundt M."/>
            <person name="Munk A.C."/>
            <person name="Okinaka R.T."/>
            <person name="Parson-Quintana B."/>
            <person name="Reilly L.P."/>
            <person name="Richardson P."/>
            <person name="Robinson D.L."/>
            <person name="Rubin E."/>
            <person name="Saunders E."/>
            <person name="Tapia R."/>
            <person name="Tesmer J.G."/>
            <person name="Thayer N."/>
            <person name="Thompson L.S."/>
            <person name="Tice H."/>
            <person name="Ticknor L.O."/>
            <person name="Wills P.L."/>
            <person name="Brettin T.S."/>
            <person name="Gilna P."/>
        </authorList>
    </citation>
    <scope>NUCLEOTIDE SEQUENCE [LARGE SCALE GENOMIC DNA]</scope>
    <source>
        <strain>ZK / E33L</strain>
    </source>
</reference>
<organism>
    <name type="scientific">Bacillus cereus (strain ZK / E33L)</name>
    <dbReference type="NCBI Taxonomy" id="288681"/>
    <lineage>
        <taxon>Bacteria</taxon>
        <taxon>Bacillati</taxon>
        <taxon>Bacillota</taxon>
        <taxon>Bacilli</taxon>
        <taxon>Bacillales</taxon>
        <taxon>Bacillaceae</taxon>
        <taxon>Bacillus</taxon>
        <taxon>Bacillus cereus group</taxon>
    </lineage>
</organism>
<keyword id="KW-0328">Glycosyltransferase</keyword>
<keyword id="KW-0808">Transferase</keyword>